<reference key="1">
    <citation type="journal article" date="2011" name="Stand. Genomic Sci.">
        <title>Complete genome sequence of 'Thioalkalivibrio sulfidophilus' HL-EbGr7.</title>
        <authorList>
            <person name="Muyzer G."/>
            <person name="Sorokin D.Y."/>
            <person name="Mavromatis K."/>
            <person name="Lapidus A."/>
            <person name="Clum A."/>
            <person name="Ivanova N."/>
            <person name="Pati A."/>
            <person name="d'Haeseleer P."/>
            <person name="Woyke T."/>
            <person name="Kyrpides N.C."/>
        </authorList>
    </citation>
    <scope>NUCLEOTIDE SEQUENCE [LARGE SCALE GENOMIC DNA]</scope>
    <source>
        <strain>HL-EbGR7</strain>
    </source>
</reference>
<accession>B8GRC9</accession>
<gene>
    <name evidence="1" type="primary">mnmG</name>
    <name evidence="1" type="synonym">gidA</name>
    <name type="ordered locus">Tgr7_3316</name>
</gene>
<evidence type="ECO:0000255" key="1">
    <source>
        <dbReference type="HAMAP-Rule" id="MF_00129"/>
    </source>
</evidence>
<evidence type="ECO:0000256" key="2">
    <source>
        <dbReference type="SAM" id="MobiDB-lite"/>
    </source>
</evidence>
<protein>
    <recommendedName>
        <fullName evidence="1">tRNA uridine 5-carboxymethylaminomethyl modification enzyme MnmG</fullName>
    </recommendedName>
    <alternativeName>
        <fullName evidence="1">Glucose-inhibited division protein A</fullName>
    </alternativeName>
</protein>
<keyword id="KW-0963">Cytoplasm</keyword>
<keyword id="KW-0274">FAD</keyword>
<keyword id="KW-0285">Flavoprotein</keyword>
<keyword id="KW-0520">NAD</keyword>
<keyword id="KW-1185">Reference proteome</keyword>
<keyword id="KW-0819">tRNA processing</keyword>
<organism>
    <name type="scientific">Thioalkalivibrio sulfidiphilus (strain HL-EbGR7)</name>
    <dbReference type="NCBI Taxonomy" id="396588"/>
    <lineage>
        <taxon>Bacteria</taxon>
        <taxon>Pseudomonadati</taxon>
        <taxon>Pseudomonadota</taxon>
        <taxon>Gammaproteobacteria</taxon>
        <taxon>Chromatiales</taxon>
        <taxon>Ectothiorhodospiraceae</taxon>
        <taxon>Thioalkalivibrio</taxon>
    </lineage>
</organism>
<proteinExistence type="inferred from homology"/>
<dbReference type="EMBL" id="CP001339">
    <property type="protein sequence ID" value="ACL74383.1"/>
    <property type="molecule type" value="Genomic_DNA"/>
</dbReference>
<dbReference type="RefSeq" id="WP_012639845.1">
    <property type="nucleotide sequence ID" value="NC_011901.1"/>
</dbReference>
<dbReference type="SMR" id="B8GRC9"/>
<dbReference type="STRING" id="396588.Tgr7_3316"/>
<dbReference type="KEGG" id="tgr:Tgr7_3316"/>
<dbReference type="eggNOG" id="COG0445">
    <property type="taxonomic scope" value="Bacteria"/>
</dbReference>
<dbReference type="HOGENOM" id="CLU_007831_2_2_6"/>
<dbReference type="OrthoDB" id="9815560at2"/>
<dbReference type="Proteomes" id="UP000002383">
    <property type="component" value="Chromosome"/>
</dbReference>
<dbReference type="GO" id="GO:0005829">
    <property type="term" value="C:cytosol"/>
    <property type="evidence" value="ECO:0007669"/>
    <property type="project" value="TreeGrafter"/>
</dbReference>
<dbReference type="GO" id="GO:0050660">
    <property type="term" value="F:flavin adenine dinucleotide binding"/>
    <property type="evidence" value="ECO:0007669"/>
    <property type="project" value="UniProtKB-UniRule"/>
</dbReference>
<dbReference type="GO" id="GO:0030488">
    <property type="term" value="P:tRNA methylation"/>
    <property type="evidence" value="ECO:0007669"/>
    <property type="project" value="TreeGrafter"/>
</dbReference>
<dbReference type="GO" id="GO:0002098">
    <property type="term" value="P:tRNA wobble uridine modification"/>
    <property type="evidence" value="ECO:0007669"/>
    <property type="project" value="InterPro"/>
</dbReference>
<dbReference type="FunFam" id="1.10.10.1800:FF:000001">
    <property type="entry name" value="tRNA uridine 5-carboxymethylaminomethyl modification enzyme MnmG"/>
    <property type="match status" value="1"/>
</dbReference>
<dbReference type="FunFam" id="1.10.150.570:FF:000001">
    <property type="entry name" value="tRNA uridine 5-carboxymethylaminomethyl modification enzyme MnmG"/>
    <property type="match status" value="1"/>
</dbReference>
<dbReference type="FunFam" id="3.50.50.60:FF:000002">
    <property type="entry name" value="tRNA uridine 5-carboxymethylaminomethyl modification enzyme MnmG"/>
    <property type="match status" value="1"/>
</dbReference>
<dbReference type="FunFam" id="3.50.50.60:FF:000010">
    <property type="entry name" value="tRNA uridine 5-carboxymethylaminomethyl modification enzyme MnmG"/>
    <property type="match status" value="1"/>
</dbReference>
<dbReference type="Gene3D" id="3.50.50.60">
    <property type="entry name" value="FAD/NAD(P)-binding domain"/>
    <property type="match status" value="2"/>
</dbReference>
<dbReference type="Gene3D" id="1.10.150.570">
    <property type="entry name" value="GidA associated domain, C-terminal subdomain"/>
    <property type="match status" value="1"/>
</dbReference>
<dbReference type="Gene3D" id="1.10.10.1800">
    <property type="entry name" value="tRNA uridine 5-carboxymethylaminomethyl modification enzyme MnmG/GidA"/>
    <property type="match status" value="1"/>
</dbReference>
<dbReference type="HAMAP" id="MF_00129">
    <property type="entry name" value="MnmG_GidA"/>
    <property type="match status" value="1"/>
</dbReference>
<dbReference type="InterPro" id="IPR036188">
    <property type="entry name" value="FAD/NAD-bd_sf"/>
</dbReference>
<dbReference type="InterPro" id="IPR049312">
    <property type="entry name" value="GIDA_C_N"/>
</dbReference>
<dbReference type="InterPro" id="IPR004416">
    <property type="entry name" value="MnmG"/>
</dbReference>
<dbReference type="InterPro" id="IPR002218">
    <property type="entry name" value="MnmG-rel"/>
</dbReference>
<dbReference type="InterPro" id="IPR020595">
    <property type="entry name" value="MnmG-rel_CS"/>
</dbReference>
<dbReference type="InterPro" id="IPR026904">
    <property type="entry name" value="MnmG_C"/>
</dbReference>
<dbReference type="InterPro" id="IPR047001">
    <property type="entry name" value="MnmG_C_subdom"/>
</dbReference>
<dbReference type="InterPro" id="IPR044920">
    <property type="entry name" value="MnmG_C_subdom_sf"/>
</dbReference>
<dbReference type="InterPro" id="IPR040131">
    <property type="entry name" value="MnmG_N"/>
</dbReference>
<dbReference type="NCBIfam" id="TIGR00136">
    <property type="entry name" value="mnmG_gidA"/>
    <property type="match status" value="1"/>
</dbReference>
<dbReference type="PANTHER" id="PTHR11806">
    <property type="entry name" value="GLUCOSE INHIBITED DIVISION PROTEIN A"/>
    <property type="match status" value="1"/>
</dbReference>
<dbReference type="PANTHER" id="PTHR11806:SF0">
    <property type="entry name" value="PROTEIN MTO1 HOMOLOG, MITOCHONDRIAL"/>
    <property type="match status" value="1"/>
</dbReference>
<dbReference type="Pfam" id="PF01134">
    <property type="entry name" value="GIDA"/>
    <property type="match status" value="1"/>
</dbReference>
<dbReference type="Pfam" id="PF21680">
    <property type="entry name" value="GIDA_C_1st"/>
    <property type="match status" value="1"/>
</dbReference>
<dbReference type="Pfam" id="PF13932">
    <property type="entry name" value="SAM_GIDA_C"/>
    <property type="match status" value="1"/>
</dbReference>
<dbReference type="SMART" id="SM01228">
    <property type="entry name" value="GIDA_assoc_3"/>
    <property type="match status" value="1"/>
</dbReference>
<dbReference type="SUPFAM" id="SSF51905">
    <property type="entry name" value="FAD/NAD(P)-binding domain"/>
    <property type="match status" value="1"/>
</dbReference>
<dbReference type="PROSITE" id="PS01280">
    <property type="entry name" value="GIDA_1"/>
    <property type="match status" value="1"/>
</dbReference>
<dbReference type="PROSITE" id="PS01281">
    <property type="entry name" value="GIDA_2"/>
    <property type="match status" value="1"/>
</dbReference>
<feature type="chain" id="PRO_1000122757" description="tRNA uridine 5-carboxymethylaminomethyl modification enzyme MnmG">
    <location>
        <begin position="1"/>
        <end position="639"/>
    </location>
</feature>
<feature type="region of interest" description="Disordered" evidence="2">
    <location>
        <begin position="620"/>
        <end position="639"/>
    </location>
</feature>
<feature type="binding site" evidence="1">
    <location>
        <begin position="13"/>
        <end position="18"/>
    </location>
    <ligand>
        <name>FAD</name>
        <dbReference type="ChEBI" id="CHEBI:57692"/>
    </ligand>
</feature>
<feature type="binding site" evidence="1">
    <location>
        <position position="125"/>
    </location>
    <ligand>
        <name>FAD</name>
        <dbReference type="ChEBI" id="CHEBI:57692"/>
    </ligand>
</feature>
<feature type="binding site" evidence="1">
    <location>
        <position position="180"/>
    </location>
    <ligand>
        <name>FAD</name>
        <dbReference type="ChEBI" id="CHEBI:57692"/>
    </ligand>
</feature>
<feature type="binding site" evidence="1">
    <location>
        <begin position="273"/>
        <end position="287"/>
    </location>
    <ligand>
        <name>NAD(+)</name>
        <dbReference type="ChEBI" id="CHEBI:57540"/>
    </ligand>
</feature>
<feature type="binding site" evidence="1">
    <location>
        <position position="370"/>
    </location>
    <ligand>
        <name>FAD</name>
        <dbReference type="ChEBI" id="CHEBI:57692"/>
    </ligand>
</feature>
<sequence>MGFEASYDVIVVGGGHAGTEAALASARAGARTLLLTHNIETIGQMSCNPAIGGIGKGHLVKEIDALGGLMARAADRGGIHFRTLNSRKGPAVRATRAQADRVRYKAAVRSVVENTPHLFLFQQAVDDLIVEGERVAGVITQTGLRFRSPAVVLTVGTFLGGRIHVGEVQHAGGRAGDPPSIALAARLRELAPRVGRLKTGTPPRIDGRSIDYAQLTEQPGDAPRPVFSFIGARDEHPPQVSCWIARTTEHTHAIIRGALHRSPMYSGAIEGVGPRYCPSIEDKVVRFADKDSHQVFIEPEGLDTHEVYPNGISTSLPFDVQFELVRSIPGFEQAHITRPGYAIEYDYFDPRDLKPSLETRCLAGLFFAGQINGTTGYEEAAAQGLVAGLNAARSVRDLAPWCPRRDEAYIGVLIDDLITRGTAEPYRMFTSRAEYRLMLREDNADLRLTPLGRDMGLVDDARWAAFCTKREAVERETQRLAATRLDPERVDREAAERVIGGAFSREQNLLDLLRRPEVDYAALMGLEGAGPGVEDPRVAEQVEIGAKYAGYIQRQQDEVARQQRHENLALPEGLDYAAITGLSMEVRQKLAAHRPHTLGQAARIPGVTPAAVSLLLVHVKRQGGNGPQSPRPDDGRARA</sequence>
<comment type="function">
    <text evidence="1">NAD-binding protein involved in the addition of a carboxymethylaminomethyl (cmnm) group at the wobble position (U34) of certain tRNAs, forming tRNA-cmnm(5)s(2)U34.</text>
</comment>
<comment type="cofactor">
    <cofactor evidence="1">
        <name>FAD</name>
        <dbReference type="ChEBI" id="CHEBI:57692"/>
    </cofactor>
</comment>
<comment type="subunit">
    <text evidence="1">Homodimer. Heterotetramer of two MnmE and two MnmG subunits.</text>
</comment>
<comment type="subcellular location">
    <subcellularLocation>
        <location evidence="1">Cytoplasm</location>
    </subcellularLocation>
</comment>
<comment type="similarity">
    <text evidence="1">Belongs to the MnmG family.</text>
</comment>
<name>MNMG_THISH</name>